<keyword id="KW-0052">Apoplast</keyword>
<keyword id="KW-0325">Glycoprotein</keyword>
<keyword id="KW-0326">Glycosidase</keyword>
<keyword id="KW-0378">Hydrolase</keyword>
<keyword id="KW-1185">Reference proteome</keyword>
<keyword id="KW-0964">Secreted</keyword>
<keyword id="KW-0732">Signal</keyword>
<gene>
    <name type="ordered locus">Os04g0560400</name>
    <name type="ordered locus">LOC_Os04g47280</name>
    <name type="ORF">OSJNBa0084K11.7</name>
</gene>
<accession>Q7XUR3</accession>
<sequence length="517" mass="56792">MATILLLLLGLLVGLPLLRAHGVTGSAAPTPPPLPVLPVPSYAQLQWQLSEMALFLHFGPNTFTDSEWGSVRADPAVFAPSALDAGQWARAAAAGGFGRVVLTAKHHDGFCLWPSALTNYSVAASPWKGGAGDVVGELAAAARAEGIGLGLYLSPWDRHEPVYGDTVAYNEHYLGQMTELLTRYGDVEEVWLDGAKGEGKDMDYMFDAWFALIHQLQQRVVIFSDAGPDTRWVGDEAGVAGYTCWSPFNKSTVTIGHIIPEYSRCGDPFGQDWVPAECDVSIRPGWFWHASEKPKNATTLLDIYYKSVGRNCLLILNVPPNSSGLISTEDMQVLQEFTEIRQTIFSQNFAANATVTASTVRGGLGNQQFAPSNVLQESIYSYWAPEEGQSSWEMLFDLGQSASFNVIQLQEPIQMGQRVIKFRVEILVDELWQTIVEGTTIGYKRLFQFPVVEGQFLKLSIDGARADPLISFFGVFTDSFSVTYSLENHEKPSVVNSSEVIMLRTDHSFGNKSIATM</sequence>
<comment type="function">
    <text>Alpha-L-fucosidase is responsible for hydrolyzing the alpha-1,6-linked fucose joined to the reducing-end N-acetylglucosamine of the carbohydrate moieties of glycoproteins. Active only against 2'-fucosyl-lactitol when heterologously expressed.</text>
</comment>
<comment type="catalytic activity">
    <reaction>
        <text>an alpha-L-fucoside + H2O = L-fucose + an alcohol</text>
        <dbReference type="Rhea" id="RHEA:12288"/>
        <dbReference type="ChEBI" id="CHEBI:2181"/>
        <dbReference type="ChEBI" id="CHEBI:15377"/>
        <dbReference type="ChEBI" id="CHEBI:28349"/>
        <dbReference type="ChEBI" id="CHEBI:30879"/>
        <dbReference type="EC" id="3.2.1.51"/>
    </reaction>
</comment>
<comment type="subcellular location">
    <subcellularLocation>
        <location evidence="1">Secreted</location>
        <location evidence="1">Extracellular space</location>
        <location evidence="1">Apoplast</location>
    </subcellularLocation>
</comment>
<comment type="similarity">
    <text evidence="3">Belongs to the glycosyl hydrolase 29 family.</text>
</comment>
<reference key="1">
    <citation type="journal article" date="2002" name="Nature">
        <title>Sequence and analysis of rice chromosome 4.</title>
        <authorList>
            <person name="Feng Q."/>
            <person name="Zhang Y."/>
            <person name="Hao P."/>
            <person name="Wang S."/>
            <person name="Fu G."/>
            <person name="Huang Y."/>
            <person name="Li Y."/>
            <person name="Zhu J."/>
            <person name="Liu Y."/>
            <person name="Hu X."/>
            <person name="Jia P."/>
            <person name="Zhang Y."/>
            <person name="Zhao Q."/>
            <person name="Ying K."/>
            <person name="Yu S."/>
            <person name="Tang Y."/>
            <person name="Weng Q."/>
            <person name="Zhang L."/>
            <person name="Lu Y."/>
            <person name="Mu J."/>
            <person name="Lu Y."/>
            <person name="Zhang L.S."/>
            <person name="Yu Z."/>
            <person name="Fan D."/>
            <person name="Liu X."/>
            <person name="Lu T."/>
            <person name="Li C."/>
            <person name="Wu Y."/>
            <person name="Sun T."/>
            <person name="Lei H."/>
            <person name="Li T."/>
            <person name="Hu H."/>
            <person name="Guan J."/>
            <person name="Wu M."/>
            <person name="Zhang R."/>
            <person name="Zhou B."/>
            <person name="Chen Z."/>
            <person name="Chen L."/>
            <person name="Jin Z."/>
            <person name="Wang R."/>
            <person name="Yin H."/>
            <person name="Cai Z."/>
            <person name="Ren S."/>
            <person name="Lv G."/>
            <person name="Gu W."/>
            <person name="Zhu G."/>
            <person name="Tu Y."/>
            <person name="Jia J."/>
            <person name="Zhang Y."/>
            <person name="Chen J."/>
            <person name="Kang H."/>
            <person name="Chen X."/>
            <person name="Shao C."/>
            <person name="Sun Y."/>
            <person name="Hu Q."/>
            <person name="Zhang X."/>
            <person name="Zhang W."/>
            <person name="Wang L."/>
            <person name="Ding C."/>
            <person name="Sheng H."/>
            <person name="Gu J."/>
            <person name="Chen S."/>
            <person name="Ni L."/>
            <person name="Zhu F."/>
            <person name="Chen W."/>
            <person name="Lan L."/>
            <person name="Lai Y."/>
            <person name="Cheng Z."/>
            <person name="Gu M."/>
            <person name="Jiang J."/>
            <person name="Li J."/>
            <person name="Hong G."/>
            <person name="Xue Y."/>
            <person name="Han B."/>
        </authorList>
    </citation>
    <scope>NUCLEOTIDE SEQUENCE [LARGE SCALE GENOMIC DNA]</scope>
    <source>
        <strain>cv. Nipponbare</strain>
    </source>
</reference>
<reference key="2">
    <citation type="journal article" date="2005" name="Nature">
        <title>The map-based sequence of the rice genome.</title>
        <authorList>
            <consortium name="International rice genome sequencing project (IRGSP)"/>
        </authorList>
    </citation>
    <scope>NUCLEOTIDE SEQUENCE [LARGE SCALE GENOMIC DNA]</scope>
    <source>
        <strain>cv. Nipponbare</strain>
    </source>
</reference>
<reference key="3">
    <citation type="journal article" date="2013" name="Rice">
        <title>Improvement of the Oryza sativa Nipponbare reference genome using next generation sequence and optical map data.</title>
        <authorList>
            <person name="Kawahara Y."/>
            <person name="de la Bastide M."/>
            <person name="Hamilton J.P."/>
            <person name="Kanamori H."/>
            <person name="McCombie W.R."/>
            <person name="Ouyang S."/>
            <person name="Schwartz D.C."/>
            <person name="Tanaka T."/>
            <person name="Wu J."/>
            <person name="Zhou S."/>
            <person name="Childs K.L."/>
            <person name="Davidson R.M."/>
            <person name="Lin H."/>
            <person name="Quesada-Ocampo L."/>
            <person name="Vaillancourt B."/>
            <person name="Sakai H."/>
            <person name="Lee S.S."/>
            <person name="Kim J."/>
            <person name="Numa H."/>
            <person name="Itoh T."/>
            <person name="Buell C.R."/>
            <person name="Matsumoto T."/>
        </authorList>
    </citation>
    <scope>GENOME REANNOTATION</scope>
    <source>
        <strain>cv. Nipponbare</strain>
    </source>
</reference>
<protein>
    <recommendedName>
        <fullName>Putative alpha-L-fucosidase 1</fullName>
        <ecNumber>3.2.1.51</ecNumber>
    </recommendedName>
    <alternativeName>
        <fullName>Alpha-L-fucoside fucohydrolase</fullName>
    </alternativeName>
</protein>
<name>FUCO1_ORYSJ</name>
<organism>
    <name type="scientific">Oryza sativa subsp. japonica</name>
    <name type="common">Rice</name>
    <dbReference type="NCBI Taxonomy" id="39947"/>
    <lineage>
        <taxon>Eukaryota</taxon>
        <taxon>Viridiplantae</taxon>
        <taxon>Streptophyta</taxon>
        <taxon>Embryophyta</taxon>
        <taxon>Tracheophyta</taxon>
        <taxon>Spermatophyta</taxon>
        <taxon>Magnoliopsida</taxon>
        <taxon>Liliopsida</taxon>
        <taxon>Poales</taxon>
        <taxon>Poaceae</taxon>
        <taxon>BOP clade</taxon>
        <taxon>Oryzoideae</taxon>
        <taxon>Oryzeae</taxon>
        <taxon>Oryzinae</taxon>
        <taxon>Oryza</taxon>
        <taxon>Oryza sativa</taxon>
    </lineage>
</organism>
<dbReference type="EC" id="3.2.1.51"/>
<dbReference type="EMBL" id="AL606687">
    <property type="protein sequence ID" value="CAD41073.2"/>
    <property type="molecule type" value="Genomic_DNA"/>
</dbReference>
<dbReference type="EMBL" id="AP014960">
    <property type="status" value="NOT_ANNOTATED_CDS"/>
    <property type="molecule type" value="Genomic_DNA"/>
</dbReference>
<dbReference type="SMR" id="Q7XUR3"/>
<dbReference type="FunCoup" id="Q7XUR3">
    <property type="interactions" value="292"/>
</dbReference>
<dbReference type="STRING" id="39947.Q7XUR3"/>
<dbReference type="PaxDb" id="39947-Q7XUR3"/>
<dbReference type="eggNOG" id="KOG3340">
    <property type="taxonomic scope" value="Eukaryota"/>
</dbReference>
<dbReference type="HOGENOM" id="CLU_002934_7_1_1"/>
<dbReference type="InParanoid" id="Q7XUR3"/>
<dbReference type="Proteomes" id="UP000000763">
    <property type="component" value="Chromosome 4"/>
</dbReference>
<dbReference type="Proteomes" id="UP000059680">
    <property type="component" value="Chromosome 4"/>
</dbReference>
<dbReference type="GO" id="GO:0048046">
    <property type="term" value="C:apoplast"/>
    <property type="evidence" value="ECO:0007669"/>
    <property type="project" value="UniProtKB-SubCell"/>
</dbReference>
<dbReference type="GO" id="GO:0005764">
    <property type="term" value="C:lysosome"/>
    <property type="evidence" value="ECO:0000318"/>
    <property type="project" value="GO_Central"/>
</dbReference>
<dbReference type="GO" id="GO:0004560">
    <property type="term" value="F:alpha-L-fucosidase activity"/>
    <property type="evidence" value="ECO:0000318"/>
    <property type="project" value="GO_Central"/>
</dbReference>
<dbReference type="GO" id="GO:0006004">
    <property type="term" value="P:fucose metabolic process"/>
    <property type="evidence" value="ECO:0000318"/>
    <property type="project" value="GO_Central"/>
</dbReference>
<dbReference type="GO" id="GO:0016139">
    <property type="term" value="P:glycoside catabolic process"/>
    <property type="evidence" value="ECO:0000318"/>
    <property type="project" value="GO_Central"/>
</dbReference>
<dbReference type="FunFam" id="2.60.120.260:FF:000093">
    <property type="entry name" value="Alpha-L-fucosidase 1"/>
    <property type="match status" value="1"/>
</dbReference>
<dbReference type="FunFam" id="3.20.20.80:FF:000052">
    <property type="entry name" value="Putative alpha-L-fucosidase 1"/>
    <property type="match status" value="1"/>
</dbReference>
<dbReference type="Gene3D" id="2.60.120.260">
    <property type="entry name" value="Galactose-binding domain-like"/>
    <property type="match status" value="1"/>
</dbReference>
<dbReference type="Gene3D" id="3.20.20.80">
    <property type="entry name" value="Glycosidases"/>
    <property type="match status" value="1"/>
</dbReference>
<dbReference type="InterPro" id="IPR008979">
    <property type="entry name" value="Galactose-bd-like_sf"/>
</dbReference>
<dbReference type="InterPro" id="IPR000933">
    <property type="entry name" value="Glyco_hydro_29"/>
</dbReference>
<dbReference type="InterPro" id="IPR017853">
    <property type="entry name" value="Glycoside_hydrolase_SF"/>
</dbReference>
<dbReference type="PANTHER" id="PTHR10030">
    <property type="entry name" value="ALPHA-L-FUCOSIDASE"/>
    <property type="match status" value="1"/>
</dbReference>
<dbReference type="PANTHER" id="PTHR10030:SF27">
    <property type="entry name" value="ALPHA-L-FUCOSIDASE 1"/>
    <property type="match status" value="1"/>
</dbReference>
<dbReference type="Pfam" id="PF01120">
    <property type="entry name" value="Alpha_L_fucos"/>
    <property type="match status" value="1"/>
</dbReference>
<dbReference type="SMART" id="SM00812">
    <property type="entry name" value="Alpha_L_fucos"/>
    <property type="match status" value="1"/>
</dbReference>
<dbReference type="SUPFAM" id="SSF51445">
    <property type="entry name" value="(Trans)glycosidases"/>
    <property type="match status" value="1"/>
</dbReference>
<dbReference type="SUPFAM" id="SSF49785">
    <property type="entry name" value="Galactose-binding domain-like"/>
    <property type="match status" value="1"/>
</dbReference>
<evidence type="ECO:0000250" key="1"/>
<evidence type="ECO:0000255" key="2"/>
<evidence type="ECO:0000305" key="3"/>
<proteinExistence type="inferred from homology"/>
<feature type="signal peptide" evidence="2">
    <location>
        <begin position="1"/>
        <end position="20"/>
    </location>
</feature>
<feature type="chain" id="PRO_0000225693" description="Putative alpha-L-fucosidase 1">
    <location>
        <begin position="21"/>
        <end position="517"/>
    </location>
</feature>
<feature type="glycosylation site" description="N-linked (GlcNAc...) asparagine" evidence="2">
    <location>
        <position position="119"/>
    </location>
</feature>
<feature type="glycosylation site" description="N-linked (GlcNAc...) asparagine" evidence="2">
    <location>
        <position position="249"/>
    </location>
</feature>
<feature type="glycosylation site" description="N-linked (GlcNAc...) asparagine" evidence="2">
    <location>
        <position position="296"/>
    </location>
</feature>
<feature type="glycosylation site" description="N-linked (GlcNAc...) asparagine" evidence="2">
    <location>
        <position position="321"/>
    </location>
</feature>
<feature type="glycosylation site" description="N-linked (GlcNAc...) asparagine" evidence="2">
    <location>
        <position position="352"/>
    </location>
</feature>
<feature type="glycosylation site" description="N-linked (GlcNAc...) asparagine" evidence="2">
    <location>
        <position position="496"/>
    </location>
</feature>
<feature type="glycosylation site" description="N-linked (GlcNAc...) asparagine" evidence="2">
    <location>
        <position position="511"/>
    </location>
</feature>